<sequence length="579" mass="63139">MEESHFNSNPYFWPSIPTVSGQIENTMFINKMKDQLLPEKGCGLAPPHYPTLLTVPASVSLSSGISMDTESKSEQLTPHSQASVTQNITVVPVPSTGLMTAGVSCSQRWRREGSQSRGPGLVITSPSGSLVTTASSAQTFPISTPMIVSALPPGSQALQVVPDLSKKVASTLTEEGGGGGGGGGTVAPPKPPRGRKKKRMLESGLPEMNDPYVLAPGDDDDHQKDGKTYRCRMCSLTFYSKSEMQIHSKSHTETKPHKCPHCSKTFANSSYLAQHIRIHSGAKPYSCNFCEKSFRQLSHLQQHTRIHSKMHTETIKPHKCPHCSKTFANTSYLAQHLRIHSGAKPYNCSYCQKAFRQLSHLQQHTRIHTGDRPYKCAHPGCEKAFTQLSNLQSHRRQHNKDKPFKCHNCHRAYTDAASLEAHLSTHTVKHAKVYTCTICSRAYTSETYLMKHMRKHNPPDLQQQVQAAAAAAAVAQAQAQAQAQAQAQAQAQAQAQAQAQAQASQASQQQQQQQPPPPQPPHFQSPGAAPQGGGGGDSNQNPPPQCSFDLTPYKPAEHHKDICLTVTTSTIQVEHLASS</sequence>
<gene>
    <name type="primary">Znf384</name>
    <name type="synonym">Ciz</name>
    <name type="synonym">Nmp4</name>
    <name type="synonym">Zfp384</name>
</gene>
<proteinExistence type="evidence at protein level"/>
<keyword id="KW-0025">Alternative splicing</keyword>
<keyword id="KW-0238">DNA-binding</keyword>
<keyword id="KW-0479">Metal-binding</keyword>
<keyword id="KW-0539">Nucleus</keyword>
<keyword id="KW-1185">Reference proteome</keyword>
<keyword id="KW-0677">Repeat</keyword>
<keyword id="KW-0804">Transcription</keyword>
<keyword id="KW-0805">Transcription regulation</keyword>
<keyword id="KW-0862">Zinc</keyword>
<keyword id="KW-0863">Zinc-finger</keyword>
<organism>
    <name type="scientific">Rattus norvegicus</name>
    <name type="common">Rat</name>
    <dbReference type="NCBI Taxonomy" id="10116"/>
    <lineage>
        <taxon>Eukaryota</taxon>
        <taxon>Metazoa</taxon>
        <taxon>Chordata</taxon>
        <taxon>Craniata</taxon>
        <taxon>Vertebrata</taxon>
        <taxon>Euteleostomi</taxon>
        <taxon>Mammalia</taxon>
        <taxon>Eutheria</taxon>
        <taxon>Euarchontoglires</taxon>
        <taxon>Glires</taxon>
        <taxon>Rodentia</taxon>
        <taxon>Myomorpha</taxon>
        <taxon>Muroidea</taxon>
        <taxon>Muridae</taxon>
        <taxon>Murinae</taxon>
        <taxon>Rattus</taxon>
    </lineage>
</organism>
<feature type="chain" id="PRO_0000047553" description="Zinc finger protein 384">
    <location>
        <begin position="1"/>
        <end position="579"/>
    </location>
</feature>
<feature type="zinc finger region" description="C2H2-type 1" evidence="1">
    <location>
        <begin position="229"/>
        <end position="251"/>
    </location>
</feature>
<feature type="zinc finger region" description="C2H2-type 2" evidence="1">
    <location>
        <begin position="257"/>
        <end position="279"/>
    </location>
</feature>
<feature type="zinc finger region" description="C2H2-type 3" evidence="1">
    <location>
        <begin position="285"/>
        <end position="307"/>
    </location>
</feature>
<feature type="zinc finger region" description="C2H2-type 4" evidence="1">
    <location>
        <begin position="318"/>
        <end position="340"/>
    </location>
</feature>
<feature type="zinc finger region" description="C2H2-type 5" evidence="1">
    <location>
        <begin position="346"/>
        <end position="368"/>
    </location>
</feature>
<feature type="zinc finger region" description="C2H2-type 6" evidence="1">
    <location>
        <begin position="374"/>
        <end position="398"/>
    </location>
</feature>
<feature type="zinc finger region" description="C2H2-type 7" evidence="1">
    <location>
        <begin position="404"/>
        <end position="426"/>
    </location>
</feature>
<feature type="zinc finger region" description="C2H2-type 8" evidence="1">
    <location>
        <begin position="434"/>
        <end position="456"/>
    </location>
</feature>
<feature type="region of interest" description="Disordered" evidence="2">
    <location>
        <begin position="171"/>
        <end position="198"/>
    </location>
</feature>
<feature type="region of interest" description="Disordered" evidence="2">
    <location>
        <begin position="500"/>
        <end position="553"/>
    </location>
</feature>
<feature type="compositionally biased region" description="Gly residues" evidence="2">
    <location>
        <begin position="175"/>
        <end position="185"/>
    </location>
</feature>
<feature type="compositionally biased region" description="Low complexity" evidence="2">
    <location>
        <begin position="500"/>
        <end position="513"/>
    </location>
</feature>
<feature type="compositionally biased region" description="Pro residues" evidence="2">
    <location>
        <begin position="514"/>
        <end position="523"/>
    </location>
</feature>
<feature type="splice variant" id="VSP_006921" description="In isoform 2." evidence="4">
    <location>
        <begin position="103"/>
        <end position="118"/>
    </location>
</feature>
<feature type="splice variant" id="VSP_006922" description="In isoform 3." evidence="4">
    <location>
        <begin position="301"/>
        <end position="361"/>
    </location>
</feature>
<feature type="sequence conflict" description="In Ref. 1; BAA89664." evidence="5" ref="1">
    <original>GG</original>
    <variation>RS</variation>
    <location>
        <begin position="178"/>
        <end position="179"/>
    </location>
</feature>
<feature type="sequence conflict" description="In Ref. 1; BAA89664." evidence="5" ref="1">
    <original>LA</original>
    <variation>WP</variation>
    <location>
        <begin position="576"/>
        <end position="577"/>
    </location>
</feature>
<name>ZN384_RAT</name>
<accession>Q9EQJ4</accession>
<accession>Q9EQJ2</accession>
<accession>Q9EQJ3</accession>
<accession>Q9JMJ5</accession>
<dbReference type="EMBL" id="AB019281">
    <property type="protein sequence ID" value="BAA89664.1"/>
    <property type="molecule type" value="mRNA"/>
</dbReference>
<dbReference type="EMBL" id="AF216804">
    <property type="protein sequence ID" value="AAG40582.1"/>
    <property type="molecule type" value="mRNA"/>
</dbReference>
<dbReference type="EMBL" id="AF216805">
    <property type="protein sequence ID" value="AAG40583.1"/>
    <property type="molecule type" value="mRNA"/>
</dbReference>
<dbReference type="EMBL" id="AF216806">
    <property type="protein sequence ID" value="AAG40584.1"/>
    <property type="molecule type" value="mRNA"/>
</dbReference>
<dbReference type="RefSeq" id="NP_001030002.1">
    <property type="nucleotide sequence ID" value="NM_001034830.1"/>
</dbReference>
<dbReference type="RefSeq" id="NP_001030003.1">
    <property type="nucleotide sequence ID" value="NM_001034831.1"/>
</dbReference>
<dbReference type="RefSeq" id="NP_596920.2">
    <property type="nucleotide sequence ID" value="NM_133429.2"/>
</dbReference>
<dbReference type="SMR" id="Q9EQJ4"/>
<dbReference type="FunCoup" id="Q9EQJ4">
    <property type="interactions" value="2820"/>
</dbReference>
<dbReference type="STRING" id="10116.ENSRNOP00000023192"/>
<dbReference type="PhosphoSitePlus" id="Q9EQJ4"/>
<dbReference type="PaxDb" id="10116-ENSRNOP00000052839"/>
<dbReference type="GeneID" id="171018"/>
<dbReference type="KEGG" id="rno:171018"/>
<dbReference type="UCSC" id="RGD:708346">
    <molecule id="Q9EQJ4-1"/>
    <property type="organism name" value="rat"/>
</dbReference>
<dbReference type="AGR" id="RGD:708346"/>
<dbReference type="CTD" id="269800"/>
<dbReference type="RGD" id="708346">
    <property type="gene designation" value="Zfp384"/>
</dbReference>
<dbReference type="eggNOG" id="KOG1721">
    <property type="taxonomic scope" value="Eukaryota"/>
</dbReference>
<dbReference type="InParanoid" id="Q9EQJ4"/>
<dbReference type="OrthoDB" id="5305647at2759"/>
<dbReference type="PhylomeDB" id="Q9EQJ4"/>
<dbReference type="PRO" id="PR:Q9EQJ4"/>
<dbReference type="Proteomes" id="UP000002494">
    <property type="component" value="Unplaced"/>
</dbReference>
<dbReference type="GO" id="GO:0005925">
    <property type="term" value="C:focal adhesion"/>
    <property type="evidence" value="ECO:0000314"/>
    <property type="project" value="RGD"/>
</dbReference>
<dbReference type="GO" id="GO:0005634">
    <property type="term" value="C:nucleus"/>
    <property type="evidence" value="ECO:0000318"/>
    <property type="project" value="GO_Central"/>
</dbReference>
<dbReference type="GO" id="GO:0001228">
    <property type="term" value="F:DNA-binding transcription activator activity, RNA polymerase II-specific"/>
    <property type="evidence" value="ECO:0000314"/>
    <property type="project" value="NTNU_SB"/>
</dbReference>
<dbReference type="GO" id="GO:0000981">
    <property type="term" value="F:DNA-binding transcription factor activity, RNA polymerase II-specific"/>
    <property type="evidence" value="ECO:0000318"/>
    <property type="project" value="GO_Central"/>
</dbReference>
<dbReference type="GO" id="GO:0000978">
    <property type="term" value="F:RNA polymerase II cis-regulatory region sequence-specific DNA binding"/>
    <property type="evidence" value="ECO:0000314"/>
    <property type="project" value="NTNU_SB"/>
</dbReference>
<dbReference type="GO" id="GO:0000977">
    <property type="term" value="F:RNA polymerase II transcription regulatory region sequence-specific DNA binding"/>
    <property type="evidence" value="ECO:0000318"/>
    <property type="project" value="GO_Central"/>
</dbReference>
<dbReference type="GO" id="GO:0043565">
    <property type="term" value="F:sequence-specific DNA binding"/>
    <property type="evidence" value="ECO:0000314"/>
    <property type="project" value="RGD"/>
</dbReference>
<dbReference type="GO" id="GO:1990837">
    <property type="term" value="F:sequence-specific double-stranded DNA binding"/>
    <property type="evidence" value="ECO:0000266"/>
    <property type="project" value="RGD"/>
</dbReference>
<dbReference type="GO" id="GO:0017124">
    <property type="term" value="F:SH3 domain binding"/>
    <property type="evidence" value="ECO:0000315"/>
    <property type="project" value="RGD"/>
</dbReference>
<dbReference type="GO" id="GO:0008270">
    <property type="term" value="F:zinc ion binding"/>
    <property type="evidence" value="ECO:0007669"/>
    <property type="project" value="UniProtKB-KW"/>
</dbReference>
<dbReference type="GO" id="GO:0006913">
    <property type="term" value="P:nucleocytoplasmic transport"/>
    <property type="evidence" value="ECO:0000315"/>
    <property type="project" value="RGD"/>
</dbReference>
<dbReference type="GO" id="GO:0050714">
    <property type="term" value="P:positive regulation of protein secretion"/>
    <property type="evidence" value="ECO:0000314"/>
    <property type="project" value="RGD"/>
</dbReference>
<dbReference type="GO" id="GO:0045944">
    <property type="term" value="P:positive regulation of transcription by RNA polymerase II"/>
    <property type="evidence" value="ECO:0000314"/>
    <property type="project" value="NTNU_SB"/>
</dbReference>
<dbReference type="GO" id="GO:0006357">
    <property type="term" value="P:regulation of transcription by RNA polymerase II"/>
    <property type="evidence" value="ECO:0000318"/>
    <property type="project" value="GO_Central"/>
</dbReference>
<dbReference type="FunFam" id="3.30.160.60:FF:000158">
    <property type="entry name" value="Zinc finger protein 362"/>
    <property type="match status" value="1"/>
</dbReference>
<dbReference type="FunFam" id="3.30.160.60:FF:000549">
    <property type="entry name" value="zinc finger protein 384 isoform X1"/>
    <property type="match status" value="2"/>
</dbReference>
<dbReference type="FunFam" id="3.30.160.60:FF:000544">
    <property type="entry name" value="zinc finger protein 384 isoform X3"/>
    <property type="match status" value="2"/>
</dbReference>
<dbReference type="FunFam" id="3.30.160.60:FF:000216">
    <property type="entry name" value="Zinc finger protein 384 like"/>
    <property type="match status" value="1"/>
</dbReference>
<dbReference type="FunFam" id="3.30.160.60:FF:000369">
    <property type="entry name" value="Zinc finger protein 384 like"/>
    <property type="match status" value="1"/>
</dbReference>
<dbReference type="Gene3D" id="3.30.160.60">
    <property type="entry name" value="Classic Zinc Finger"/>
    <property type="match status" value="7"/>
</dbReference>
<dbReference type="InterPro" id="IPR036236">
    <property type="entry name" value="Znf_C2H2_sf"/>
</dbReference>
<dbReference type="InterPro" id="IPR013087">
    <property type="entry name" value="Znf_C2H2_type"/>
</dbReference>
<dbReference type="PANTHER" id="PTHR24379:SF127">
    <property type="entry name" value="BLOODY FINGERS-RELATED"/>
    <property type="match status" value="1"/>
</dbReference>
<dbReference type="PANTHER" id="PTHR24379">
    <property type="entry name" value="KRAB AND ZINC FINGER DOMAIN-CONTAINING"/>
    <property type="match status" value="1"/>
</dbReference>
<dbReference type="Pfam" id="PF00096">
    <property type="entry name" value="zf-C2H2"/>
    <property type="match status" value="6"/>
</dbReference>
<dbReference type="Pfam" id="PF13912">
    <property type="entry name" value="zf-C2H2_6"/>
    <property type="match status" value="1"/>
</dbReference>
<dbReference type="SMART" id="SM00355">
    <property type="entry name" value="ZnF_C2H2"/>
    <property type="match status" value="8"/>
</dbReference>
<dbReference type="SUPFAM" id="SSF57667">
    <property type="entry name" value="beta-beta-alpha zinc fingers"/>
    <property type="match status" value="5"/>
</dbReference>
<dbReference type="PROSITE" id="PS00028">
    <property type="entry name" value="ZINC_FINGER_C2H2_1"/>
    <property type="match status" value="8"/>
</dbReference>
<dbReference type="PROSITE" id="PS50157">
    <property type="entry name" value="ZINC_FINGER_C2H2_2"/>
    <property type="match status" value="8"/>
</dbReference>
<reference key="1">
    <citation type="journal article" date="2000" name="Mol. Cell. Biol.">
        <title>CIZ, a zinc finger protein that interacts with p130cas and activates the expression of matrix metalloproteinases.</title>
        <authorList>
            <person name="Nakamoto T."/>
            <person name="Yamagata T."/>
            <person name="Sakai R."/>
            <person name="Ogawa S."/>
            <person name="Honda H."/>
            <person name="Ueno H."/>
            <person name="Hirano N."/>
            <person name="Yazaki Y."/>
            <person name="Hirai H."/>
        </authorList>
    </citation>
    <scope>NUCLEOTIDE SEQUENCE [MRNA] (ISOFORM 1)</scope>
    <scope>SUBCELLULAR LOCATION</scope>
    <scope>DNA-BINDING</scope>
    <scope>INTERACTION WITH BCAR1</scope>
</reference>
<reference key="2">
    <citation type="journal article" date="2001" name="J. Bone Miner. Res.">
        <title>Cloning and functional analysis of a family of nuclear matrix transcription factors (NP/NMP4) that regulate type I collagen expression in osteoblasts.</title>
        <authorList>
            <person name="Thunyakitpisal P."/>
            <person name="Alvarez M."/>
            <person name="Tokunaga K."/>
            <person name="Onyia J.E."/>
            <person name="Hock J."/>
            <person name="Ohashi N."/>
            <person name="Feister H."/>
            <person name="Rhodes S.J."/>
            <person name="Bidwell J.P."/>
        </authorList>
    </citation>
    <scope>NUCLEOTIDE SEQUENCE [MRNA] (ISOFORMS 1; 2 AND 3)</scope>
    <source>
        <strain>Sprague-Dawley</strain>
    </source>
</reference>
<comment type="function">
    <text>Transcription factor that binds the consensus DNA sequence [GC]AAAAA. Seems to bind and regulate the promoters of MMP1, MMP3, MMP7 and COL1A1.</text>
</comment>
<comment type="subunit">
    <text evidence="3">Interacts with BCAR1.</text>
</comment>
<comment type="subcellular location">
    <subcellularLocation>
        <location evidence="3">Nucleus</location>
    </subcellularLocation>
</comment>
<comment type="alternative products">
    <event type="alternative splicing"/>
    <isoform>
        <id>Q9EQJ4-1</id>
        <name>1</name>
        <sequence type="displayed"/>
    </isoform>
    <isoform>
        <id>Q9EQJ4-2</id>
        <name>2</name>
        <sequence type="described" ref="VSP_006921"/>
    </isoform>
    <isoform>
        <id>Q9EQJ4-3</id>
        <name>3</name>
        <sequence type="described" ref="VSP_006922"/>
    </isoform>
    <text>Additional isoforms seem to exist.</text>
</comment>
<comment type="tissue specificity">
    <text>Expressed in osteocytes, osteoblasts, and chondrocytes in bone.</text>
</comment>
<comment type="similarity">
    <text evidence="5">Belongs to the krueppel C2H2-type zinc-finger protein family.</text>
</comment>
<protein>
    <recommendedName>
        <fullName>Zinc finger protein 384</fullName>
    </recommendedName>
    <alternativeName>
        <fullName>Cas-associated zinc finger protein</fullName>
    </alternativeName>
    <alternativeName>
        <fullName>Nuclear matrix transcription factor 4</fullName>
        <shortName>Nuclear matrix protein 4</shortName>
    </alternativeName>
</protein>
<evidence type="ECO:0000255" key="1">
    <source>
        <dbReference type="PROSITE-ProRule" id="PRU00042"/>
    </source>
</evidence>
<evidence type="ECO:0000256" key="2">
    <source>
        <dbReference type="SAM" id="MobiDB-lite"/>
    </source>
</evidence>
<evidence type="ECO:0000269" key="3">
    <source>
    </source>
</evidence>
<evidence type="ECO:0000303" key="4">
    <source>
    </source>
</evidence>
<evidence type="ECO:0000305" key="5"/>